<gene>
    <name type="primary">P/X</name>
</gene>
<proteinExistence type="evidence at protein level"/>
<dbReference type="EMBL" id="U04608">
    <property type="protein sequence ID" value="AAA20225.1"/>
    <property type="molecule type" value="Genomic_RNA"/>
</dbReference>
<dbReference type="RefSeq" id="NP_042021.1">
    <property type="nucleotide sequence ID" value="NC_001607.1"/>
</dbReference>
<dbReference type="PDB" id="8BS7">
    <property type="method" value="X-ray"/>
    <property type="resolution" value="3.20 A"/>
    <property type="chains" value="A/B/C/D/E/F/G/H=1-201"/>
</dbReference>
<dbReference type="PDBsum" id="8BS7"/>
<dbReference type="SASBDB" id="P0C799"/>
<dbReference type="SMR" id="P0C799"/>
<dbReference type="IntAct" id="P0C799">
    <property type="interactions" value="1"/>
</dbReference>
<dbReference type="Proteomes" id="UP000007804">
    <property type="component" value="Segment"/>
</dbReference>
<dbReference type="GO" id="GO:0030430">
    <property type="term" value="C:host cell cytoplasm"/>
    <property type="evidence" value="ECO:0007669"/>
    <property type="project" value="UniProtKB-SubCell"/>
</dbReference>
<dbReference type="GO" id="GO:0042025">
    <property type="term" value="C:host cell nucleus"/>
    <property type="evidence" value="ECO:0007669"/>
    <property type="project" value="UniProtKB-SubCell"/>
</dbReference>
<dbReference type="GO" id="GO:0039675">
    <property type="term" value="P:exit of virus from host cell nucleus through nuclear pore"/>
    <property type="evidence" value="ECO:0000314"/>
    <property type="project" value="UniProtKB"/>
</dbReference>
<dbReference type="GO" id="GO:0039723">
    <property type="term" value="P:symbiont-mediated suppression of host cytoplasmic pattern recognition receptor signaling pathway via inhibition of TBK1 activity"/>
    <property type="evidence" value="ECO:0007669"/>
    <property type="project" value="UniProtKB-KW"/>
</dbReference>
<dbReference type="GO" id="GO:0039722">
    <property type="term" value="P:symbiont-mediated suppression of host toll-like receptor signaling pathway"/>
    <property type="evidence" value="ECO:0007669"/>
    <property type="project" value="UniProtKB-KW"/>
</dbReference>
<dbReference type="InterPro" id="IPR009517">
    <property type="entry name" value="BDV_P24"/>
</dbReference>
<dbReference type="Pfam" id="PF06595">
    <property type="entry name" value="BDV_P24"/>
    <property type="match status" value="1"/>
</dbReference>
<organismHost>
    <name type="scientific">Bos taurus</name>
    <name type="common">Bovine</name>
    <dbReference type="NCBI Taxonomy" id="9913"/>
</organismHost>
<organismHost>
    <name type="scientific">Bradypodidae</name>
    <name type="common">three-fingered sloths</name>
    <dbReference type="NCBI Taxonomy" id="9352"/>
</organismHost>
<organismHost>
    <name type="scientific">Capra hircus</name>
    <name type="common">Goat</name>
    <dbReference type="NCBI Taxonomy" id="9925"/>
</organismHost>
<organismHost>
    <name type="scientific">Cervidae</name>
    <name type="common">Deer</name>
    <dbReference type="NCBI Taxonomy" id="9850"/>
</organismHost>
<organismHost>
    <name type="scientific">Crocidura leucodon</name>
    <name type="common">Bicoloured white-toothed shrew</name>
    <name type="synonym">Celebes shrew</name>
    <dbReference type="NCBI Taxonomy" id="109474"/>
</organismHost>
<organismHost>
    <name type="scientific">Equidae</name>
    <name type="common">horses</name>
    <dbReference type="NCBI Taxonomy" id="9788"/>
</organismHost>
<organismHost>
    <name type="scientific">Felis catus</name>
    <name type="common">Cat</name>
    <name type="synonym">Felis silvestris catus</name>
    <dbReference type="NCBI Taxonomy" id="9685"/>
</organismHost>
<organismHost>
    <name type="scientific">Hexaprotodon liberiensis</name>
    <name type="common">Pygmy hippopotamus</name>
    <name type="synonym">Choeropsis liberiensis</name>
    <dbReference type="NCBI Taxonomy" id="56798"/>
</organismHost>
<organismHost>
    <name type="scientific">Lama glama</name>
    <name type="common">Llama</name>
    <dbReference type="NCBI Taxonomy" id="9844"/>
</organismHost>
<organismHost>
    <name type="scientific">Oryctolagus cuniculus</name>
    <name type="common">Rabbit</name>
    <dbReference type="NCBI Taxonomy" id="9986"/>
</organismHost>
<organismHost>
    <name type="scientific">Ovis aries</name>
    <name type="common">Sheep</name>
    <dbReference type="NCBI Taxonomy" id="9940"/>
</organismHost>
<organismHost>
    <name type="scientific">Struthio camelus</name>
    <name type="common">Common ostrich</name>
    <dbReference type="NCBI Taxonomy" id="8801"/>
</organismHost>
<organismHost>
    <name type="scientific">Varecia variegata</name>
    <name type="common">Black-and-white ruffed lemur</name>
    <name type="synonym">Lemur variegatus</name>
    <dbReference type="NCBI Taxonomy" id="9455"/>
</organismHost>
<organismHost>
    <name type="scientific">Vicugna pacos</name>
    <name type="common">Alpaca</name>
    <name type="synonym">Lama pacos</name>
    <dbReference type="NCBI Taxonomy" id="30538"/>
</organismHost>
<accession>P0C799</accession>
<accession>P26668</accession>
<feature type="chain" id="PRO_0000405343" description="Phosphoprotein">
    <location>
        <begin position="1"/>
        <end position="201"/>
    </location>
</feature>
<feature type="region of interest" description="Disordered" evidence="3">
    <location>
        <begin position="1"/>
        <end position="70"/>
    </location>
</feature>
<feature type="region of interest" description="Disordered" evidence="3">
    <location>
        <begin position="176"/>
        <end position="201"/>
    </location>
</feature>
<feature type="short sequence motif" description="Nuclear localization signal 1" evidence="11">
    <location>
        <begin position="29"/>
        <end position="36"/>
    </location>
</feature>
<feature type="short sequence motif" description="Nuclear localization signal 2" evidence="11">
    <location>
        <begin position="181"/>
        <end position="193"/>
    </location>
</feature>
<feature type="splice variant" id="VSP_040674" description="In isoform p16." evidence="13">
    <location>
        <begin position="1"/>
        <end position="55"/>
    </location>
</feature>
<feature type="helix" evidence="14">
    <location>
        <begin position="86"/>
        <end position="124"/>
    </location>
</feature>
<feature type="helix" evidence="14">
    <location>
        <begin position="128"/>
        <end position="151"/>
    </location>
</feature>
<feature type="helix" evidence="14">
    <location>
        <begin position="153"/>
        <end position="157"/>
    </location>
</feature>
<keyword id="KW-0002">3D-structure</keyword>
<keyword id="KW-0024">Alternative initiation</keyword>
<keyword id="KW-1035">Host cytoplasm</keyword>
<keyword id="KW-1048">Host nucleus</keyword>
<keyword id="KW-0945">Host-virus interaction</keyword>
<keyword id="KW-1090">Inhibition of host innate immune response by virus</keyword>
<keyword id="KW-1113">Inhibition of host RLR pathway by virus</keyword>
<keyword id="KW-1223">Inhibition of host TBK1 by virus</keyword>
<keyword id="KW-1225">Inhibition of host TLR pathway by virus</keyword>
<keyword id="KW-0597">Phosphoprotein</keyword>
<keyword id="KW-1185">Reference proteome</keyword>
<keyword id="KW-0899">Viral immunoevasion</keyword>
<comment type="function">
    <text evidence="2 6 9 10">Essential component of the RNA polymerase transcription and replication complex. Acts as a scaffold which brings L in close proximity to the N-RNA complex. Plays a role in the segregation of the viral genome in host daughter cells during mitosis by interacting with host HMGB1, a host chromatin-remodeling DNA architectural protein, thereby stabilizing RNP on chromosomes. Interacts with host TBK1 and thus interferes with activation of cellular antiviral state. Inhibits cellular histone acetyltransferase activities.</text>
</comment>
<comment type="subunit">
    <text evidence="2 4 6 8 9 12">Homomultimer; only active in its oligomeric state (PubMed:15509569). Interacts with nucleoprotein/N (PubMed:9880009). Interacts with matrix/M protein (PubMed:17079312). Interacts with host TBK1 (By similarity). Interacts with polymerase L (PubMed:10756058). Interacts with host HMGB1; this interaction is required to stabilize RNP on chromosomes (PubMed:22607802).</text>
</comment>
<comment type="subcellular location">
    <subcellularLocation>
        <location evidence="4 5 7 10 11">Host nucleus</location>
    </subcellularLocation>
    <subcellularLocation>
        <location evidence="5 7">Host cytoplasm</location>
    </subcellularLocation>
    <text evidence="5">P subcellular localization is modulated by the interaction with protein X.</text>
</comment>
<comment type="alternative products">
    <event type="alternative initiation"/>
    <isoform>
        <id>P0C799-1</id>
        <name>p24</name>
        <sequence type="displayed"/>
    </isoform>
    <isoform>
        <id>P0C799-2</id>
        <name>p16</name>
        <sequence type="described" ref="VSP_040674"/>
    </isoform>
</comment>
<comment type="PTM">
    <text evidence="1">Phosphorylated by host PKC epsilon and casein kinase II.</text>
</comment>
<comment type="miscellaneous">
    <text evidence="2">The P/X gene has two overlapping open reading frames. One encodes the P protein and the other the X protein. The P (p24), X and P'(p16) proteins are produced by ribosomal leaky scanning.</text>
</comment>
<name>PHOSP_BDVV</name>
<organism>
    <name type="scientific">Borna disease virus (strain V)</name>
    <name type="common">BDV</name>
    <dbReference type="NCBI Taxonomy" id="928296"/>
    <lineage>
        <taxon>Viruses</taxon>
        <taxon>Riboviria</taxon>
        <taxon>Orthornavirae</taxon>
        <taxon>Negarnaviricota</taxon>
        <taxon>Haploviricotina</taxon>
        <taxon>Monjiviricetes</taxon>
        <taxon>Mononegavirales</taxon>
        <taxon>Bornaviridae</taxon>
        <taxon>Borna disease virus</taxon>
    </lineage>
</organism>
<sequence length="201" mass="22489">MATRPSSLVDSLEDEEDPQTLRRERPGSPRPRKVPRNALTQPVDQLLKDLRKNPSMISDPDQRTGREQLSNDELIKKLVTELAENSMIEAEEVRGTLGDISARIEAGFESLSALQVETIQTAQRCDHSDSIRILGENIKILDRSMKTMMETMKLMMEKVDLLYASTAVGTSAPMLPSHPAPPRIYPQLPSAPTTDEWDIIP</sequence>
<protein>
    <recommendedName>
        <fullName>Phosphoprotein</fullName>
        <shortName>P protein</shortName>
    </recommendedName>
    <alternativeName>
        <fullName>p23</fullName>
    </alternativeName>
    <alternativeName>
        <fullName>p24</fullName>
    </alternativeName>
</protein>
<evidence type="ECO:0000250" key="1"/>
<evidence type="ECO:0000250" key="2">
    <source>
        <dbReference type="UniProtKB" id="P0C798"/>
    </source>
</evidence>
<evidence type="ECO:0000256" key="3">
    <source>
        <dbReference type="SAM" id="MobiDB-lite"/>
    </source>
</evidence>
<evidence type="ECO:0000269" key="4">
    <source>
    </source>
</evidence>
<evidence type="ECO:0000269" key="5">
    <source>
    </source>
</evidence>
<evidence type="ECO:0000269" key="6">
    <source>
    </source>
</evidence>
<evidence type="ECO:0000269" key="7">
    <source>
    </source>
</evidence>
<evidence type="ECO:0000269" key="8">
    <source>
    </source>
</evidence>
<evidence type="ECO:0000269" key="9">
    <source>
    </source>
</evidence>
<evidence type="ECO:0000269" key="10">
    <source>
    </source>
</evidence>
<evidence type="ECO:0000269" key="11">
    <source>
    </source>
</evidence>
<evidence type="ECO:0000269" key="12">
    <source>
    </source>
</evidence>
<evidence type="ECO:0000305" key="13"/>
<evidence type="ECO:0007829" key="14">
    <source>
        <dbReference type="PDB" id="8BS7"/>
    </source>
</evidence>
<reference key="1">
    <citation type="journal article" date="1994" name="Proc. Natl. Acad. Sci. U.S.A.">
        <title>Genomic organization of Borna disease virus.</title>
        <authorList>
            <person name="Briese T."/>
            <person name="Schneemann A."/>
            <person name="Lewis A.J."/>
            <person name="Park Y.-S."/>
            <person name="Kim S."/>
            <person name="Ludwig H."/>
            <person name="Lipkin W.I."/>
        </authorList>
    </citation>
    <scope>NUCLEOTIDE SEQUENCE [GENOMIC RNA]</scope>
</reference>
<reference key="2">
    <citation type="journal article" date="1998" name="J. Gen. Virol.">
        <title>Two domains of the Borna disease virus p40 protein are required for interaction with the p23 protein.</title>
        <authorList>
            <person name="Berg M."/>
            <person name="Ehrenborg C."/>
            <person name="Blomberg J."/>
            <person name="Pipkorn R."/>
            <person name="Berg A.L."/>
        </authorList>
    </citation>
    <scope>INTERACTION WITH NUCLEOPROTEIN</scope>
</reference>
<reference key="3">
    <citation type="journal article" date="1998" name="J. Virol.">
        <title>Two proline-rich nuclear localization signals in the amino- and carboxyl-terminal regions of the Borna disease virus phosphoprotein.</title>
        <authorList>
            <person name="Shoya Y."/>
            <person name="Kobayashi T."/>
            <person name="Koda T."/>
            <person name="Ikuta K."/>
            <person name="Kakinuma M."/>
            <person name="Kishi M."/>
        </authorList>
    </citation>
    <scope>SUBCELLULAR LOCATION</scope>
    <scope>MOTIF</scope>
</reference>
<reference key="4">
    <citation type="journal article" date="2000" name="J. Virol.">
        <title>Expression and characterization of the Borna disease virus polymerase.</title>
        <authorList>
            <person name="Walker M.P."/>
            <person name="Jordan I."/>
            <person name="Briese T."/>
            <person name="Fischer N."/>
            <person name="Lipkin W.I."/>
        </authorList>
    </citation>
    <scope>INTERACTION WITH POLYMERASE L</scope>
    <scope>SUBCELLULAR LOCATION</scope>
</reference>
<reference key="5">
    <citation type="journal article" date="2003" name="J. Virol.">
        <title>Modulation of Borna disease virus phosphoprotein nuclear localization by the viral protein X encoded in the overlapping open reading frame.</title>
        <authorList>
            <person name="Kobayashi T."/>
            <person name="Zhang G."/>
            <person name="Lee B.J."/>
            <person name="Baba S."/>
            <person name="Yamashita M."/>
            <person name="Kamitani W."/>
            <person name="Yanai H."/>
            <person name="Tomonaga K."/>
            <person name="Ikuta K."/>
        </authorList>
    </citation>
    <scope>SUBCELLULAR LOCATION</scope>
</reference>
<reference key="6">
    <citation type="journal article" date="2004" name="J. Biol. Chem.">
        <title>Overlap of interaction domains indicates a central role of the P protein in assembly and regulation of the Borna disease virus polymerase complex.</title>
        <authorList>
            <person name="Schneider U."/>
            <person name="Blechschmidt K."/>
            <person name="Schwemmle M."/>
            <person name="Staeheli P."/>
        </authorList>
    </citation>
    <scope>FUNCTION</scope>
    <scope>SUBUNIT</scope>
</reference>
<reference key="7">
    <citation type="journal article" date="2006" name="J. Virol.">
        <title>A methionine-rich domain mediates CRM1-dependent nuclear export activity of Borna disease virus phosphoprotein.</title>
        <authorList>
            <person name="Yanai H."/>
            <person name="Kobayashi T."/>
            <person name="Hayashi Y."/>
            <person name="Watanabe Y."/>
            <person name="Ohtaki N."/>
            <person name="Zhang G."/>
            <person name="de la Torre J.C."/>
            <person name="Ikuta K."/>
            <person name="Tomonaga K."/>
        </authorList>
    </citation>
    <scope>SUBCELLULAR LOCATION</scope>
</reference>
<reference key="8">
    <citation type="journal article" date="2007" name="J. Virol.">
        <title>Borna disease virus matrix protein is an integral component of the viral ribonucleoprotein complex that does not interfere with polymerase activity.</title>
        <authorList>
            <person name="Chase G."/>
            <person name="Mayer D."/>
            <person name="Hildebrand A."/>
            <person name="Frank R."/>
            <person name="Hayashi Y."/>
            <person name="Tomonaga K."/>
            <person name="Schwemmle M."/>
        </authorList>
    </citation>
    <scope>SUBCELLULAR LOCATION</scope>
    <scope>INTERACTION WITH PHOSPHOPROTEIN</scope>
</reference>
<reference key="9">
    <citation type="journal article" date="2012" name="Cell Host Microbe">
        <title>Bornavirus closely associates and segregates with host chromosomes to ensure persistent intranuclear infection.</title>
        <authorList>
            <person name="Matsumoto Y."/>
            <person name="Hayashi Y."/>
            <person name="Omori H."/>
            <person name="Honda T."/>
            <person name="Daito T."/>
            <person name="Horie M."/>
            <person name="Ikuta K."/>
            <person name="Fujino K."/>
            <person name="Nakamura S."/>
            <person name="Schneider U."/>
            <person name="Chase G."/>
            <person name="Yoshimori T."/>
            <person name="Schwemmle M."/>
            <person name="Tomonaga K."/>
        </authorList>
    </citation>
    <scope>FUNCTION</scope>
    <scope>INTERACTION WITH HOST HMGB1</scope>
</reference>
<reference key="10">
    <citation type="journal article" date="2015" name="J. Virol.">
        <title>Borna disease virus phosphoprotein modulates epigenetic signaling in neurons to control viral replication.</title>
        <authorList>
            <person name="Bonnaud E.M."/>
            <person name="Szelechowski M."/>
            <person name="Betourne A."/>
            <person name="Foret C."/>
            <person name="Thouard A."/>
            <person name="Gonzalez-Dunia D."/>
            <person name="Malnou C.E."/>
        </authorList>
    </citation>
    <scope>FUNCTION</scope>
    <scope>SUBCELLULAR LOCATION</scope>
</reference>